<organism>
    <name type="scientific">Acholeplasma laidlawii (strain PG-8A)</name>
    <dbReference type="NCBI Taxonomy" id="441768"/>
    <lineage>
        <taxon>Bacteria</taxon>
        <taxon>Bacillati</taxon>
        <taxon>Mycoplasmatota</taxon>
        <taxon>Mollicutes</taxon>
        <taxon>Acholeplasmatales</taxon>
        <taxon>Acholeplasmataceae</taxon>
        <taxon>Acholeplasma</taxon>
    </lineage>
</organism>
<dbReference type="EMBL" id="CP000896">
    <property type="protein sequence ID" value="ABX81167.1"/>
    <property type="molecule type" value="Genomic_DNA"/>
</dbReference>
<dbReference type="RefSeq" id="WP_012242498.1">
    <property type="nucleotide sequence ID" value="NC_010163.1"/>
</dbReference>
<dbReference type="SMR" id="A9NFN7"/>
<dbReference type="STRING" id="441768.ACL_0549"/>
<dbReference type="GeneID" id="41338727"/>
<dbReference type="KEGG" id="acl:ACL_0549"/>
<dbReference type="eggNOG" id="COG0576">
    <property type="taxonomic scope" value="Bacteria"/>
</dbReference>
<dbReference type="HOGENOM" id="CLU_057217_6_3_14"/>
<dbReference type="OrthoDB" id="9812586at2"/>
<dbReference type="Proteomes" id="UP000008558">
    <property type="component" value="Chromosome"/>
</dbReference>
<dbReference type="GO" id="GO:0005737">
    <property type="term" value="C:cytoplasm"/>
    <property type="evidence" value="ECO:0007669"/>
    <property type="project" value="UniProtKB-SubCell"/>
</dbReference>
<dbReference type="GO" id="GO:0000774">
    <property type="term" value="F:adenyl-nucleotide exchange factor activity"/>
    <property type="evidence" value="ECO:0007669"/>
    <property type="project" value="InterPro"/>
</dbReference>
<dbReference type="GO" id="GO:0042803">
    <property type="term" value="F:protein homodimerization activity"/>
    <property type="evidence" value="ECO:0007669"/>
    <property type="project" value="InterPro"/>
</dbReference>
<dbReference type="GO" id="GO:0051087">
    <property type="term" value="F:protein-folding chaperone binding"/>
    <property type="evidence" value="ECO:0007669"/>
    <property type="project" value="InterPro"/>
</dbReference>
<dbReference type="GO" id="GO:0051082">
    <property type="term" value="F:unfolded protein binding"/>
    <property type="evidence" value="ECO:0007669"/>
    <property type="project" value="TreeGrafter"/>
</dbReference>
<dbReference type="GO" id="GO:0006457">
    <property type="term" value="P:protein folding"/>
    <property type="evidence" value="ECO:0007669"/>
    <property type="project" value="InterPro"/>
</dbReference>
<dbReference type="CDD" id="cd00446">
    <property type="entry name" value="GrpE"/>
    <property type="match status" value="1"/>
</dbReference>
<dbReference type="FunFam" id="2.30.22.10:FF:000001">
    <property type="entry name" value="Protein GrpE"/>
    <property type="match status" value="1"/>
</dbReference>
<dbReference type="Gene3D" id="3.90.20.20">
    <property type="match status" value="1"/>
</dbReference>
<dbReference type="Gene3D" id="2.30.22.10">
    <property type="entry name" value="Head domain of nucleotide exchange factor GrpE"/>
    <property type="match status" value="1"/>
</dbReference>
<dbReference type="HAMAP" id="MF_01151">
    <property type="entry name" value="GrpE"/>
    <property type="match status" value="1"/>
</dbReference>
<dbReference type="InterPro" id="IPR000740">
    <property type="entry name" value="GrpE"/>
</dbReference>
<dbReference type="InterPro" id="IPR013805">
    <property type="entry name" value="GrpE_coiled_coil"/>
</dbReference>
<dbReference type="InterPro" id="IPR009012">
    <property type="entry name" value="GrpE_head"/>
</dbReference>
<dbReference type="NCBIfam" id="NF010738">
    <property type="entry name" value="PRK14140.1"/>
    <property type="match status" value="1"/>
</dbReference>
<dbReference type="PANTHER" id="PTHR21237">
    <property type="entry name" value="GRPE PROTEIN"/>
    <property type="match status" value="1"/>
</dbReference>
<dbReference type="PANTHER" id="PTHR21237:SF23">
    <property type="entry name" value="GRPE PROTEIN HOMOLOG, MITOCHONDRIAL"/>
    <property type="match status" value="1"/>
</dbReference>
<dbReference type="Pfam" id="PF01025">
    <property type="entry name" value="GrpE"/>
    <property type="match status" value="1"/>
</dbReference>
<dbReference type="PRINTS" id="PR00773">
    <property type="entry name" value="GRPEPROTEIN"/>
</dbReference>
<dbReference type="SUPFAM" id="SSF58014">
    <property type="entry name" value="Coiled-coil domain of nucleotide exchange factor GrpE"/>
    <property type="match status" value="1"/>
</dbReference>
<dbReference type="SUPFAM" id="SSF51064">
    <property type="entry name" value="Head domain of nucleotide exchange factor GrpE"/>
    <property type="match status" value="1"/>
</dbReference>
<dbReference type="PROSITE" id="PS01071">
    <property type="entry name" value="GRPE"/>
    <property type="match status" value="1"/>
</dbReference>
<name>GRPE_ACHLI</name>
<feature type="chain" id="PRO_1000137521" description="Protein GrpE">
    <location>
        <begin position="1"/>
        <end position="190"/>
    </location>
</feature>
<feature type="region of interest" description="Disordered" evidence="2">
    <location>
        <begin position="1"/>
        <end position="31"/>
    </location>
</feature>
<feature type="compositionally biased region" description="Basic and acidic residues" evidence="2">
    <location>
        <begin position="1"/>
        <end position="26"/>
    </location>
</feature>
<reference key="1">
    <citation type="journal article" date="2011" name="J. Bacteriol.">
        <title>Complete genome and proteome of Acholeplasma laidlawii.</title>
        <authorList>
            <person name="Lazarev V.N."/>
            <person name="Levitskii S.A."/>
            <person name="Basovskii Y.I."/>
            <person name="Chukin M.M."/>
            <person name="Akopian T.A."/>
            <person name="Vereshchagin V.V."/>
            <person name="Kostrjukova E.S."/>
            <person name="Kovaleva G.Y."/>
            <person name="Kazanov M.D."/>
            <person name="Malko D.B."/>
            <person name="Vitreschak A.G."/>
            <person name="Sernova N.V."/>
            <person name="Gelfand M.S."/>
            <person name="Demina I.A."/>
            <person name="Serebryakova M.V."/>
            <person name="Galyamina M.A."/>
            <person name="Vtyurin N.N."/>
            <person name="Rogov S.I."/>
            <person name="Alexeev D.G."/>
            <person name="Ladygina V.G."/>
            <person name="Govorun V.M."/>
        </authorList>
    </citation>
    <scope>NUCLEOTIDE SEQUENCE [LARGE SCALE GENOMIC DNA]</scope>
    <source>
        <strain>PG-8A</strain>
    </source>
</reference>
<gene>
    <name evidence="1" type="primary">grpE</name>
    <name type="ordered locus">ACL_0549</name>
</gene>
<accession>A9NFN7</accession>
<keyword id="KW-0143">Chaperone</keyword>
<keyword id="KW-0963">Cytoplasm</keyword>
<keyword id="KW-1185">Reference proteome</keyword>
<keyword id="KW-0346">Stress response</keyword>
<evidence type="ECO:0000255" key="1">
    <source>
        <dbReference type="HAMAP-Rule" id="MF_01151"/>
    </source>
</evidence>
<evidence type="ECO:0000256" key="2">
    <source>
        <dbReference type="SAM" id="MobiDB-lite"/>
    </source>
</evidence>
<proteinExistence type="inferred from homology"/>
<protein>
    <recommendedName>
        <fullName evidence="1">Protein GrpE</fullName>
    </recommendedName>
    <alternativeName>
        <fullName evidence="1">HSP-70 cofactor</fullName>
    </alternativeName>
</protein>
<sequence>MADKEKDAVIVDETEHVDVDSKESKKEKKTKQQQKIEFLEAEVKELNDKYLRTLAEAENFKKRIQAEKIMDRKYAASSFATELLVPYEQFSKIVDFPSDNELLNNFLIGFKMIRDQFKSVLENEGVVEIKALGEVFDAKVHHAIEKESNKDKPNGTVLEVLQNGYLFKDRILRPAMVKINEWSEDNGEDK</sequence>
<comment type="function">
    <text evidence="1">Participates actively in the response to hyperosmotic and heat shock by preventing the aggregation of stress-denatured proteins, in association with DnaK and GrpE. It is the nucleotide exchange factor for DnaK and may function as a thermosensor. Unfolded proteins bind initially to DnaJ; upon interaction with the DnaJ-bound protein, DnaK hydrolyzes its bound ATP, resulting in the formation of a stable complex. GrpE releases ADP from DnaK; ATP binding to DnaK triggers the release of the substrate protein, thus completing the reaction cycle. Several rounds of ATP-dependent interactions between DnaJ, DnaK and GrpE are required for fully efficient folding.</text>
</comment>
<comment type="subunit">
    <text evidence="1">Homodimer.</text>
</comment>
<comment type="subcellular location">
    <subcellularLocation>
        <location evidence="1">Cytoplasm</location>
    </subcellularLocation>
</comment>
<comment type="similarity">
    <text evidence="1">Belongs to the GrpE family.</text>
</comment>